<reference key="1">
    <citation type="journal article" date="2005" name="Science">
        <title>Genome streamlining in a cosmopolitan oceanic bacterium.</title>
        <authorList>
            <person name="Giovannoni S.J."/>
            <person name="Tripp H.J."/>
            <person name="Givan S."/>
            <person name="Podar M."/>
            <person name="Vergin K.L."/>
            <person name="Baptista D."/>
            <person name="Bibbs L."/>
            <person name="Eads J."/>
            <person name="Richardson T.H."/>
            <person name="Noordewier M."/>
            <person name="Rappe M.S."/>
            <person name="Short J.M."/>
            <person name="Carrington J.C."/>
            <person name="Mathur E.J."/>
        </authorList>
    </citation>
    <scope>NUCLEOTIDE SEQUENCE [LARGE SCALE GENOMIC DNA]</scope>
    <source>
        <strain>HTCC1062</strain>
    </source>
</reference>
<name>DGTL1_PELUB</name>
<protein>
    <recommendedName>
        <fullName evidence="1">Deoxyguanosinetriphosphate triphosphohydrolase-like protein</fullName>
    </recommendedName>
</protein>
<keyword id="KW-0378">Hydrolase</keyword>
<keyword id="KW-1185">Reference proteome</keyword>
<organism>
    <name type="scientific">Pelagibacter ubique (strain HTCC1062)</name>
    <dbReference type="NCBI Taxonomy" id="335992"/>
    <lineage>
        <taxon>Bacteria</taxon>
        <taxon>Pseudomonadati</taxon>
        <taxon>Pseudomonadota</taxon>
        <taxon>Alphaproteobacteria</taxon>
        <taxon>Candidatus Pelagibacterales</taxon>
        <taxon>Candidatus Pelagibacteraceae</taxon>
        <taxon>Candidatus Pelagibacter</taxon>
    </lineage>
</organism>
<comment type="similarity">
    <text evidence="1">Belongs to the dGTPase family. Type 2 subfamily.</text>
</comment>
<dbReference type="EMBL" id="CP000084">
    <property type="protein sequence ID" value="AAZ21777.1"/>
    <property type="molecule type" value="Genomic_DNA"/>
</dbReference>
<dbReference type="RefSeq" id="WP_011282072.1">
    <property type="nucleotide sequence ID" value="NC_007205.1"/>
</dbReference>
<dbReference type="SMR" id="Q4FM11"/>
<dbReference type="STRING" id="335992.SAR11_0969"/>
<dbReference type="GeneID" id="66295459"/>
<dbReference type="KEGG" id="pub:SAR11_0969"/>
<dbReference type="eggNOG" id="COG0232">
    <property type="taxonomic scope" value="Bacteria"/>
</dbReference>
<dbReference type="HOGENOM" id="CLU_028163_1_0_5"/>
<dbReference type="OrthoDB" id="9803619at2"/>
<dbReference type="Proteomes" id="UP000002528">
    <property type="component" value="Chromosome"/>
</dbReference>
<dbReference type="GO" id="GO:0008832">
    <property type="term" value="F:dGTPase activity"/>
    <property type="evidence" value="ECO:0007669"/>
    <property type="project" value="TreeGrafter"/>
</dbReference>
<dbReference type="GO" id="GO:0006203">
    <property type="term" value="P:dGTP catabolic process"/>
    <property type="evidence" value="ECO:0007669"/>
    <property type="project" value="TreeGrafter"/>
</dbReference>
<dbReference type="CDD" id="cd00077">
    <property type="entry name" value="HDc"/>
    <property type="match status" value="1"/>
</dbReference>
<dbReference type="Gene3D" id="1.10.3210.10">
    <property type="entry name" value="Hypothetical protein af1432"/>
    <property type="match status" value="1"/>
</dbReference>
<dbReference type="HAMAP" id="MF_01212">
    <property type="entry name" value="dGTPase_type2"/>
    <property type="match status" value="1"/>
</dbReference>
<dbReference type="InterPro" id="IPR006261">
    <property type="entry name" value="dGTPase"/>
</dbReference>
<dbReference type="InterPro" id="IPR050135">
    <property type="entry name" value="dGTPase-like"/>
</dbReference>
<dbReference type="InterPro" id="IPR023023">
    <property type="entry name" value="dNTPase_2"/>
</dbReference>
<dbReference type="InterPro" id="IPR003607">
    <property type="entry name" value="HD/PDEase_dom"/>
</dbReference>
<dbReference type="InterPro" id="IPR006674">
    <property type="entry name" value="HD_domain"/>
</dbReference>
<dbReference type="InterPro" id="IPR026875">
    <property type="entry name" value="PHydrolase_assoc_dom"/>
</dbReference>
<dbReference type="NCBIfam" id="TIGR01353">
    <property type="entry name" value="dGTP_triPase"/>
    <property type="match status" value="1"/>
</dbReference>
<dbReference type="NCBIfam" id="NF002326">
    <property type="entry name" value="PRK01286.1-1"/>
    <property type="match status" value="1"/>
</dbReference>
<dbReference type="PANTHER" id="PTHR11373:SF43">
    <property type="entry name" value="DEOXYGUANOSINETRIPHOSPHATE TRIPHOSPHOHYDROLASE-LIKE PROTEIN"/>
    <property type="match status" value="1"/>
</dbReference>
<dbReference type="PANTHER" id="PTHR11373">
    <property type="entry name" value="DEOXYNUCLEOSIDE TRIPHOSPHATE TRIPHOSPHOHYDROLASE"/>
    <property type="match status" value="1"/>
</dbReference>
<dbReference type="Pfam" id="PF01966">
    <property type="entry name" value="HD"/>
    <property type="match status" value="1"/>
</dbReference>
<dbReference type="Pfam" id="PF13286">
    <property type="entry name" value="HD_assoc"/>
    <property type="match status" value="1"/>
</dbReference>
<dbReference type="SMART" id="SM00471">
    <property type="entry name" value="HDc"/>
    <property type="match status" value="1"/>
</dbReference>
<dbReference type="SUPFAM" id="SSF109604">
    <property type="entry name" value="HD-domain/PDEase-like"/>
    <property type="match status" value="1"/>
</dbReference>
<dbReference type="PROSITE" id="PS51831">
    <property type="entry name" value="HD"/>
    <property type="match status" value="1"/>
</dbReference>
<gene>
    <name type="ordered locus">SAR11_0969</name>
</gene>
<sequence length="371" mass="42860">MNNYSNLALSKSKGRIFKEANSLYRTPFQRDRDRIIHSASFRRLKHKTQVFVNTEGDHFRTRITHSIEVAQIARSIAKHLGLNDDLAETLSLAHDLGHTPFGHAGEDALNECMVNFGGFDHNLQTLRIVMFLEHKYLKFKGLNLTLETLDGLLKHNGAIDDLSTVNRLIGLKSFKNKINFNNSGSLEAQISAISDDIAYNNHDIQDGIRAKMFNLNDLIEINFFKDIYKSHKNNIKNNNKDILIYQIIRDSIDLMVRDLIKNTKNNLKNNKVKSLKDVYNLDDPIVCFSSKFLKIEKEVRFFLRSKMYNNKKVLLKNNHGKKIINKLFYKIKNKPKKFLNDDQLKNDTNRAIADFISGMTDRYAINLNKGI</sequence>
<proteinExistence type="inferred from homology"/>
<evidence type="ECO:0000255" key="1">
    <source>
        <dbReference type="HAMAP-Rule" id="MF_01212"/>
    </source>
</evidence>
<evidence type="ECO:0000255" key="2">
    <source>
        <dbReference type="PROSITE-ProRule" id="PRU01175"/>
    </source>
</evidence>
<accession>Q4FM11</accession>
<feature type="chain" id="PRO_1000164736" description="Deoxyguanosinetriphosphate triphosphohydrolase-like protein">
    <location>
        <begin position="1"/>
        <end position="371"/>
    </location>
</feature>
<feature type="domain" description="HD" evidence="2">
    <location>
        <begin position="62"/>
        <end position="200"/>
    </location>
</feature>